<keyword id="KW-0413">Isomerase</keyword>
<keyword id="KW-0819">tRNA processing</keyword>
<comment type="function">
    <text evidence="1">Responsible for synthesis of pseudouridine from uracil-13 in transfer RNAs.</text>
</comment>
<comment type="catalytic activity">
    <reaction evidence="1">
        <text>uridine(13) in tRNA = pseudouridine(13) in tRNA</text>
        <dbReference type="Rhea" id="RHEA:42540"/>
        <dbReference type="Rhea" id="RHEA-COMP:10105"/>
        <dbReference type="Rhea" id="RHEA-COMP:10106"/>
        <dbReference type="ChEBI" id="CHEBI:65314"/>
        <dbReference type="ChEBI" id="CHEBI:65315"/>
        <dbReference type="EC" id="5.4.99.27"/>
    </reaction>
</comment>
<comment type="similarity">
    <text evidence="1">Belongs to the pseudouridine synthase TruD family.</text>
</comment>
<reference key="1">
    <citation type="submission" date="2006-09" db="EMBL/GenBank/DDBJ databases">
        <authorList>
            <consortium name="The Klebsiella pneumonia Genome Sequencing Project"/>
            <person name="McClelland M."/>
            <person name="Sanderson E.K."/>
            <person name="Spieth J."/>
            <person name="Clifton W.S."/>
            <person name="Latreille P."/>
            <person name="Sabo A."/>
            <person name="Pepin K."/>
            <person name="Bhonagiri V."/>
            <person name="Porwollik S."/>
            <person name="Ali J."/>
            <person name="Wilson R.K."/>
        </authorList>
    </citation>
    <scope>NUCLEOTIDE SEQUENCE [LARGE SCALE GENOMIC DNA]</scope>
    <source>
        <strain>ATCC 700721 / MGH 78578</strain>
    </source>
</reference>
<organism>
    <name type="scientific">Klebsiella pneumoniae subsp. pneumoniae (strain ATCC 700721 / MGH 78578)</name>
    <dbReference type="NCBI Taxonomy" id="272620"/>
    <lineage>
        <taxon>Bacteria</taxon>
        <taxon>Pseudomonadati</taxon>
        <taxon>Pseudomonadota</taxon>
        <taxon>Gammaproteobacteria</taxon>
        <taxon>Enterobacterales</taxon>
        <taxon>Enterobacteriaceae</taxon>
        <taxon>Klebsiella/Raoultella group</taxon>
        <taxon>Klebsiella</taxon>
        <taxon>Klebsiella pneumoniae complex</taxon>
    </lineage>
</organism>
<accession>A6TD37</accession>
<dbReference type="EC" id="5.4.99.27" evidence="1"/>
<dbReference type="EMBL" id="CP000647">
    <property type="protein sequence ID" value="ABR78508.1"/>
    <property type="molecule type" value="Genomic_DNA"/>
</dbReference>
<dbReference type="RefSeq" id="WP_004185423.1">
    <property type="nucleotide sequence ID" value="NC_009648.1"/>
</dbReference>
<dbReference type="SMR" id="A6TD37"/>
<dbReference type="STRING" id="272620.KPN_03107"/>
<dbReference type="PaxDb" id="272620-KPN_03107"/>
<dbReference type="EnsemblBacteria" id="ABR78508">
    <property type="protein sequence ID" value="ABR78508"/>
    <property type="gene ID" value="KPN_03107"/>
</dbReference>
<dbReference type="KEGG" id="kpn:KPN_03107"/>
<dbReference type="HOGENOM" id="CLU_005281_4_0_6"/>
<dbReference type="Proteomes" id="UP000000265">
    <property type="component" value="Chromosome"/>
</dbReference>
<dbReference type="GO" id="GO:0005829">
    <property type="term" value="C:cytosol"/>
    <property type="evidence" value="ECO:0007669"/>
    <property type="project" value="TreeGrafter"/>
</dbReference>
<dbReference type="GO" id="GO:0003723">
    <property type="term" value="F:RNA binding"/>
    <property type="evidence" value="ECO:0007669"/>
    <property type="project" value="InterPro"/>
</dbReference>
<dbReference type="GO" id="GO:0160150">
    <property type="term" value="F:tRNA pseudouridine(13) synthase activity"/>
    <property type="evidence" value="ECO:0007669"/>
    <property type="project" value="UniProtKB-EC"/>
</dbReference>
<dbReference type="GO" id="GO:0031119">
    <property type="term" value="P:tRNA pseudouridine synthesis"/>
    <property type="evidence" value="ECO:0007669"/>
    <property type="project" value="UniProtKB-UniRule"/>
</dbReference>
<dbReference type="CDD" id="cd02575">
    <property type="entry name" value="PseudoU_synth_EcTruD"/>
    <property type="match status" value="1"/>
</dbReference>
<dbReference type="FunFam" id="3.30.2340.10:FF:000001">
    <property type="entry name" value="tRNA pseudouridine synthase D"/>
    <property type="match status" value="1"/>
</dbReference>
<dbReference type="FunFam" id="3.30.2350.20:FF:000001">
    <property type="entry name" value="tRNA pseudouridine synthase D"/>
    <property type="match status" value="1"/>
</dbReference>
<dbReference type="Gene3D" id="3.30.2350.20">
    <property type="entry name" value="TruD, catalytic domain"/>
    <property type="match status" value="1"/>
</dbReference>
<dbReference type="Gene3D" id="3.30.2340.10">
    <property type="entry name" value="TruD, insertion domain"/>
    <property type="match status" value="1"/>
</dbReference>
<dbReference type="HAMAP" id="MF_01082">
    <property type="entry name" value="TruD"/>
    <property type="match status" value="1"/>
</dbReference>
<dbReference type="InterPro" id="IPR020103">
    <property type="entry name" value="PsdUridine_synth_cat_dom_sf"/>
</dbReference>
<dbReference type="InterPro" id="IPR001656">
    <property type="entry name" value="PsdUridine_synth_TruD"/>
</dbReference>
<dbReference type="InterPro" id="IPR020119">
    <property type="entry name" value="PsdUridine_synth_TruD_CS"/>
</dbReference>
<dbReference type="InterPro" id="IPR011760">
    <property type="entry name" value="PsdUridine_synth_TruD_insert"/>
</dbReference>
<dbReference type="InterPro" id="IPR042214">
    <property type="entry name" value="TruD_catalytic"/>
</dbReference>
<dbReference type="InterPro" id="IPR043165">
    <property type="entry name" value="TruD_insert_sf"/>
</dbReference>
<dbReference type="InterPro" id="IPR050170">
    <property type="entry name" value="TruD_pseudoU_synthase"/>
</dbReference>
<dbReference type="NCBIfam" id="NF002155">
    <property type="entry name" value="PRK00984.1-4"/>
    <property type="match status" value="1"/>
</dbReference>
<dbReference type="NCBIfam" id="TIGR00094">
    <property type="entry name" value="tRNA_TruD_broad"/>
    <property type="match status" value="1"/>
</dbReference>
<dbReference type="PANTHER" id="PTHR47811">
    <property type="entry name" value="TRNA PSEUDOURIDINE SYNTHASE D"/>
    <property type="match status" value="1"/>
</dbReference>
<dbReference type="PANTHER" id="PTHR47811:SF1">
    <property type="entry name" value="TRNA PSEUDOURIDINE SYNTHASE D"/>
    <property type="match status" value="1"/>
</dbReference>
<dbReference type="Pfam" id="PF01142">
    <property type="entry name" value="TruD"/>
    <property type="match status" value="2"/>
</dbReference>
<dbReference type="SUPFAM" id="SSF55120">
    <property type="entry name" value="Pseudouridine synthase"/>
    <property type="match status" value="1"/>
</dbReference>
<dbReference type="PROSITE" id="PS50984">
    <property type="entry name" value="TRUD"/>
    <property type="match status" value="1"/>
</dbReference>
<dbReference type="PROSITE" id="PS01268">
    <property type="entry name" value="UPF0024"/>
    <property type="match status" value="1"/>
</dbReference>
<proteinExistence type="inferred from homology"/>
<protein>
    <recommendedName>
        <fullName evidence="1">tRNA pseudouridine synthase D</fullName>
        <ecNumber evidence="1">5.4.99.27</ecNumber>
    </recommendedName>
    <alternativeName>
        <fullName evidence="1">tRNA pseudouridine(13) synthase</fullName>
    </alternativeName>
    <alternativeName>
        <fullName evidence="1">tRNA pseudouridylate synthase D</fullName>
    </alternativeName>
    <alternativeName>
        <fullName evidence="1">tRNA-uridine isomerase D</fullName>
    </alternativeName>
</protein>
<name>TRUD_KLEP7</name>
<feature type="chain" id="PRO_1000084747" description="tRNA pseudouridine synthase D">
    <location>
        <begin position="1"/>
        <end position="349"/>
    </location>
</feature>
<feature type="domain" description="TRUD" evidence="1">
    <location>
        <begin position="155"/>
        <end position="303"/>
    </location>
</feature>
<feature type="active site" description="Nucleophile" evidence="1">
    <location>
        <position position="80"/>
    </location>
</feature>
<feature type="binding site" evidence="1">
    <location>
        <position position="27"/>
    </location>
    <ligand>
        <name>substrate</name>
    </ligand>
</feature>
<feature type="binding site" evidence="1">
    <location>
        <position position="129"/>
    </location>
    <ligand>
        <name>substrate</name>
    </ligand>
</feature>
<feature type="binding site" evidence="1">
    <location>
        <position position="329"/>
    </location>
    <ligand>
        <name>substrate</name>
    </ligand>
</feature>
<evidence type="ECO:0000255" key="1">
    <source>
        <dbReference type="HAMAP-Rule" id="MF_01082"/>
    </source>
</evidence>
<gene>
    <name evidence="1" type="primary">truD</name>
    <name type="ordered locus">KPN78578_30470</name>
    <name type="ORF">KPN_03107</name>
</gene>
<sequence>MIAFDQLTWLHGKPQSSGLLKANPEDFLVVEDLGFAPDGEGEHVLVRILKNGCNTRFVADALAKFLKIHAREVSFAGQKDKHAVTEQWLCARVPGKEMPDLSKFQLEGCQVLEYARHKRKLRLGALKGNQFTVILREISDRQDVETRLQAIAERGVPNYFGAQRFGIGGSNLQGALRWAESGAPVRDRNKRSFWLSAARSALFNQQVSIRLKKTEFNQVVDGDALQLAGRGSWFVVTPEELEVSQARVHNRELMITATLPGSGDWGSQRDALAFEQAAIAEETALQALLVREKVEAARRAMLLYPQQLSWNWWDDVTVELRFWLPAGSFATSVVRELINTTGDYANIAE</sequence>